<proteinExistence type="evidence at transcript level"/>
<organism>
    <name type="scientific">Oryza sativa subsp. indica</name>
    <name type="common">Rice</name>
    <dbReference type="NCBI Taxonomy" id="39946"/>
    <lineage>
        <taxon>Eukaryota</taxon>
        <taxon>Viridiplantae</taxon>
        <taxon>Streptophyta</taxon>
        <taxon>Embryophyta</taxon>
        <taxon>Tracheophyta</taxon>
        <taxon>Spermatophyta</taxon>
        <taxon>Magnoliopsida</taxon>
        <taxon>Liliopsida</taxon>
        <taxon>Poales</taxon>
        <taxon>Poaceae</taxon>
        <taxon>BOP clade</taxon>
        <taxon>Oryzoideae</taxon>
        <taxon>Oryzeae</taxon>
        <taxon>Oryzinae</taxon>
        <taxon>Oryza</taxon>
        <taxon>Oryza sativa</taxon>
    </lineage>
</organism>
<feature type="chain" id="PRO_0000392336" description="Anamorsin homolog 1">
    <location>
        <begin position="1"/>
        <end position="265"/>
    </location>
</feature>
<feature type="region of interest" description="N-terminal SAM-like domain" evidence="1">
    <location>
        <begin position="1"/>
        <end position="143"/>
    </location>
</feature>
<feature type="region of interest" description="Linker" evidence="1">
    <location>
        <begin position="144"/>
        <end position="175"/>
    </location>
</feature>
<feature type="region of interest" description="Fe-S binding site A" evidence="1">
    <location>
        <begin position="186"/>
        <end position="200"/>
    </location>
</feature>
<feature type="region of interest" description="Fe-S binding site B" evidence="1">
    <location>
        <begin position="226"/>
        <end position="240"/>
    </location>
</feature>
<feature type="short sequence motif" description="Cx2C motif 1" evidence="1">
    <location>
        <begin position="226"/>
        <end position="229"/>
    </location>
</feature>
<feature type="short sequence motif" description="Cx2C motif 2" evidence="1">
    <location>
        <begin position="237"/>
        <end position="240"/>
    </location>
</feature>
<feature type="binding site" evidence="1">
    <location>
        <position position="186"/>
    </location>
    <ligand>
        <name>[2Fe-2S] cluster</name>
        <dbReference type="ChEBI" id="CHEBI:190135"/>
    </ligand>
</feature>
<feature type="binding site" evidence="1">
    <location>
        <position position="195"/>
    </location>
    <ligand>
        <name>[2Fe-2S] cluster</name>
        <dbReference type="ChEBI" id="CHEBI:190135"/>
    </ligand>
</feature>
<feature type="binding site" evidence="1">
    <location>
        <position position="198"/>
    </location>
    <ligand>
        <name>[2Fe-2S] cluster</name>
        <dbReference type="ChEBI" id="CHEBI:190135"/>
    </ligand>
</feature>
<feature type="binding site" evidence="1">
    <location>
        <position position="200"/>
    </location>
    <ligand>
        <name>[2Fe-2S] cluster</name>
        <dbReference type="ChEBI" id="CHEBI:190135"/>
    </ligand>
</feature>
<feature type="binding site" evidence="1">
    <location>
        <position position="226"/>
    </location>
    <ligand>
        <name>[4Fe-4S] cluster</name>
        <dbReference type="ChEBI" id="CHEBI:49883"/>
    </ligand>
</feature>
<feature type="binding site" evidence="1">
    <location>
        <position position="229"/>
    </location>
    <ligand>
        <name>[4Fe-4S] cluster</name>
        <dbReference type="ChEBI" id="CHEBI:49883"/>
    </ligand>
</feature>
<feature type="binding site" evidence="1">
    <location>
        <position position="237"/>
    </location>
    <ligand>
        <name>[4Fe-4S] cluster</name>
        <dbReference type="ChEBI" id="CHEBI:49883"/>
    </ligand>
</feature>
<feature type="binding site" evidence="1">
    <location>
        <position position="240"/>
    </location>
    <ligand>
        <name>[4Fe-4S] cluster</name>
        <dbReference type="ChEBI" id="CHEBI:49883"/>
    </ligand>
</feature>
<feature type="sequence conflict" description="In Ref. 3; CT848385." evidence="2" ref="3">
    <original>LGDA</original>
    <variation>VGRC</variation>
    <location>
        <begin position="231"/>
        <end position="234"/>
    </location>
</feature>
<reference key="1">
    <citation type="journal article" date="2002" name="Nature">
        <title>Sequence and analysis of rice chromosome 4.</title>
        <authorList>
            <person name="Feng Q."/>
            <person name="Zhang Y."/>
            <person name="Hao P."/>
            <person name="Wang S."/>
            <person name="Fu G."/>
            <person name="Huang Y."/>
            <person name="Li Y."/>
            <person name="Zhu J."/>
            <person name="Liu Y."/>
            <person name="Hu X."/>
            <person name="Jia P."/>
            <person name="Zhang Y."/>
            <person name="Zhao Q."/>
            <person name="Ying K."/>
            <person name="Yu S."/>
            <person name="Tang Y."/>
            <person name="Weng Q."/>
            <person name="Zhang L."/>
            <person name="Lu Y."/>
            <person name="Mu J."/>
            <person name="Lu Y."/>
            <person name="Zhang L.S."/>
            <person name="Yu Z."/>
            <person name="Fan D."/>
            <person name="Liu X."/>
            <person name="Lu T."/>
            <person name="Li C."/>
            <person name="Wu Y."/>
            <person name="Sun T."/>
            <person name="Lei H."/>
            <person name="Li T."/>
            <person name="Hu H."/>
            <person name="Guan J."/>
            <person name="Wu M."/>
            <person name="Zhang R."/>
            <person name="Zhou B."/>
            <person name="Chen Z."/>
            <person name="Chen L."/>
            <person name="Jin Z."/>
            <person name="Wang R."/>
            <person name="Yin H."/>
            <person name="Cai Z."/>
            <person name="Ren S."/>
            <person name="Lv G."/>
            <person name="Gu W."/>
            <person name="Zhu G."/>
            <person name="Tu Y."/>
            <person name="Jia J."/>
            <person name="Zhang Y."/>
            <person name="Chen J."/>
            <person name="Kang H."/>
            <person name="Chen X."/>
            <person name="Shao C."/>
            <person name="Sun Y."/>
            <person name="Hu Q."/>
            <person name="Zhang X."/>
            <person name="Zhang W."/>
            <person name="Wang L."/>
            <person name="Ding C."/>
            <person name="Sheng H."/>
            <person name="Gu J."/>
            <person name="Chen S."/>
            <person name="Ni L."/>
            <person name="Zhu F."/>
            <person name="Chen W."/>
            <person name="Lan L."/>
            <person name="Lai Y."/>
            <person name="Cheng Z."/>
            <person name="Gu M."/>
            <person name="Jiang J."/>
            <person name="Li J."/>
            <person name="Hong G."/>
            <person name="Xue Y."/>
            <person name="Han B."/>
        </authorList>
    </citation>
    <scope>NUCLEOTIDE SEQUENCE [LARGE SCALE GENOMIC DNA]</scope>
    <source>
        <strain>cv. Guang-Lu-Ai No.4</strain>
    </source>
</reference>
<reference key="2">
    <citation type="journal article" date="2005" name="PLoS Biol.">
        <title>The genomes of Oryza sativa: a history of duplications.</title>
        <authorList>
            <person name="Yu J."/>
            <person name="Wang J."/>
            <person name="Lin W."/>
            <person name="Li S."/>
            <person name="Li H."/>
            <person name="Zhou J."/>
            <person name="Ni P."/>
            <person name="Dong W."/>
            <person name="Hu S."/>
            <person name="Zeng C."/>
            <person name="Zhang J."/>
            <person name="Zhang Y."/>
            <person name="Li R."/>
            <person name="Xu Z."/>
            <person name="Li S."/>
            <person name="Li X."/>
            <person name="Zheng H."/>
            <person name="Cong L."/>
            <person name="Lin L."/>
            <person name="Yin J."/>
            <person name="Geng J."/>
            <person name="Li G."/>
            <person name="Shi J."/>
            <person name="Liu J."/>
            <person name="Lv H."/>
            <person name="Li J."/>
            <person name="Wang J."/>
            <person name="Deng Y."/>
            <person name="Ran L."/>
            <person name="Shi X."/>
            <person name="Wang X."/>
            <person name="Wu Q."/>
            <person name="Li C."/>
            <person name="Ren X."/>
            <person name="Wang J."/>
            <person name="Wang X."/>
            <person name="Li D."/>
            <person name="Liu D."/>
            <person name="Zhang X."/>
            <person name="Ji Z."/>
            <person name="Zhao W."/>
            <person name="Sun Y."/>
            <person name="Zhang Z."/>
            <person name="Bao J."/>
            <person name="Han Y."/>
            <person name="Dong L."/>
            <person name="Ji J."/>
            <person name="Chen P."/>
            <person name="Wu S."/>
            <person name="Liu J."/>
            <person name="Xiao Y."/>
            <person name="Bu D."/>
            <person name="Tan J."/>
            <person name="Yang L."/>
            <person name="Ye C."/>
            <person name="Zhang J."/>
            <person name="Xu J."/>
            <person name="Zhou Y."/>
            <person name="Yu Y."/>
            <person name="Zhang B."/>
            <person name="Zhuang S."/>
            <person name="Wei H."/>
            <person name="Liu B."/>
            <person name="Lei M."/>
            <person name="Yu H."/>
            <person name="Li Y."/>
            <person name="Xu H."/>
            <person name="Wei S."/>
            <person name="He X."/>
            <person name="Fang L."/>
            <person name="Zhang Z."/>
            <person name="Zhang Y."/>
            <person name="Huang X."/>
            <person name="Su Z."/>
            <person name="Tong W."/>
            <person name="Li J."/>
            <person name="Tong Z."/>
            <person name="Li S."/>
            <person name="Ye J."/>
            <person name="Wang L."/>
            <person name="Fang L."/>
            <person name="Lei T."/>
            <person name="Chen C.-S."/>
            <person name="Chen H.-C."/>
            <person name="Xu Z."/>
            <person name="Li H."/>
            <person name="Huang H."/>
            <person name="Zhang F."/>
            <person name="Xu H."/>
            <person name="Li N."/>
            <person name="Zhao C."/>
            <person name="Li S."/>
            <person name="Dong L."/>
            <person name="Huang Y."/>
            <person name="Li L."/>
            <person name="Xi Y."/>
            <person name="Qi Q."/>
            <person name="Li W."/>
            <person name="Zhang B."/>
            <person name="Hu W."/>
            <person name="Zhang Y."/>
            <person name="Tian X."/>
            <person name="Jiao Y."/>
            <person name="Liang X."/>
            <person name="Jin J."/>
            <person name="Gao L."/>
            <person name="Zheng W."/>
            <person name="Hao B."/>
            <person name="Liu S.-M."/>
            <person name="Wang W."/>
            <person name="Yuan L."/>
            <person name="Cao M."/>
            <person name="McDermott J."/>
            <person name="Samudrala R."/>
            <person name="Wang J."/>
            <person name="Wong G.K.-S."/>
            <person name="Yang H."/>
        </authorList>
    </citation>
    <scope>NUCLEOTIDE SEQUENCE [LARGE SCALE GENOMIC DNA]</scope>
    <source>
        <strain>cv. 93-11</strain>
    </source>
</reference>
<reference key="3">
    <citation type="journal article" date="2007" name="Plant Mol. Biol.">
        <title>A collection of 10,096 indica rice full-length cDNAs reveals highly expressed sequence divergence between Oryza sativa indica and japonica subspecies.</title>
        <authorList>
            <person name="Liu X."/>
            <person name="Lu T."/>
            <person name="Yu S."/>
            <person name="Li Y."/>
            <person name="Huang Y."/>
            <person name="Huang T."/>
            <person name="Zhang L."/>
            <person name="Zhu J."/>
            <person name="Zhao Q."/>
            <person name="Fan D."/>
            <person name="Mu J."/>
            <person name="Shangguan Y."/>
            <person name="Feng Q."/>
            <person name="Guan J."/>
            <person name="Ying K."/>
            <person name="Zhang Y."/>
            <person name="Lin Z."/>
            <person name="Sun Z."/>
            <person name="Qian Q."/>
            <person name="Lu Y."/>
            <person name="Han B."/>
        </authorList>
    </citation>
    <scope>NUCLEOTIDE SEQUENCE [LARGE SCALE MRNA] OF 1-234</scope>
    <source>
        <strain>cv. Guang-Lu-Ai No.4</strain>
    </source>
</reference>
<accession>A2XYW4</accession>
<accession>Q259R9</accession>
<evidence type="ECO:0000255" key="1">
    <source>
        <dbReference type="HAMAP-Rule" id="MF_03115"/>
    </source>
</evidence>
<evidence type="ECO:0000305" key="2"/>
<sequence length="265" mass="27661">MAATAAAALAVTDELALPLRAVGDLAAAAGVSREEVVVITQCASLGGKLPFADASVGSVLAVIKKVENLGNQFITEISRVLKAGGMVLVQSSPSDQDPNNSIERKLLLGGFVDVQASAASSQDNEHSVNIKAKKASWSMGSSFPLKKATKGLPKIQIDDDSELIDEDSLLTEDDLKKPELPVVGDCEVGATRKACKNCTCGRAEAEEKVEKLNLTSEQINNPQSACGNCGLGDAFRCGTCPYRGLPAFKPGEKIALPGNFLAADM</sequence>
<comment type="function">
    <text evidence="1">Component of the cytosolic iron-sulfur (Fe-S) protein assembly (CIA) machinery. Required for the maturation of extramitochondrial Fe-S proteins. Part of an electron transfer chain functioning in an early step of cytosolic Fe-S biogenesis, facilitating the de novo assembly of a [4Fe-4S] cluster on the cytosolic Fe-S scaffold complex. Electrons are transferred from NADPH via a FAD- and FMN-containing diflavin oxidoreductase. Together with the diflavin oxidoreductase, also required for the assembly of the diferric tyrosyl radical cofactor of ribonucleotide reductase (RNR), probably by providing electrons for reduction during radical cofactor maturation in the catalytic small subunit.</text>
</comment>
<comment type="cofactor">
    <cofactor evidence="1">
        <name>[2Fe-2S] cluster</name>
        <dbReference type="ChEBI" id="CHEBI:190135"/>
    </cofactor>
</comment>
<comment type="cofactor">
    <cofactor evidence="1">
        <name>[4Fe-4S] cluster</name>
        <dbReference type="ChEBI" id="CHEBI:49883"/>
    </cofactor>
</comment>
<comment type="subunit">
    <text evidence="1">Monomer.</text>
</comment>
<comment type="subcellular location">
    <subcellularLocation>
        <location evidence="1">Cytoplasm</location>
    </subcellularLocation>
    <subcellularLocation>
        <location evidence="1">Mitochondrion intermembrane space</location>
    </subcellularLocation>
</comment>
<comment type="domain">
    <text evidence="1">The C-terminal domain binds 2 Fe-S clusters but is otherwise mostly in an intrinsically disordered conformation.</text>
</comment>
<comment type="domain">
    <text evidence="1">The N-terminal domain has structural similarity with S-adenosyl-L-methionine-dependent methyltransferases, but does not bind S-adenosyl-L-methionine. It is required for correct assembly of the 2 Fe-S clusters.</text>
</comment>
<comment type="domain">
    <text evidence="1">The twin Cx2C motifs are involved in the recognition by the mitochondrial MIA40-ERV1 disulfide relay system. The formation of 2 disulfide bonds in the Cx2C motifs through dithiol/disulfide exchange reactions effectively traps the protein in the mitochondrial intermembrane space.</text>
</comment>
<comment type="similarity">
    <text evidence="1">Belongs to the anamorsin family.</text>
</comment>
<comment type="sequence caution" evidence="2">
    <conflict type="frameshift">
        <sequence resource="EMBL" id="CT848385"/>
    </conflict>
</comment>
<keyword id="KW-0001">2Fe-2S</keyword>
<keyword id="KW-0004">4Fe-4S</keyword>
<keyword id="KW-0963">Cytoplasm</keyword>
<keyword id="KW-0408">Iron</keyword>
<keyword id="KW-0411">Iron-sulfur</keyword>
<keyword id="KW-0479">Metal-binding</keyword>
<keyword id="KW-0496">Mitochondrion</keyword>
<keyword id="KW-1185">Reference proteome</keyword>
<dbReference type="EMBL" id="AL732344">
    <property type="protein sequence ID" value="CAH68186.1"/>
    <property type="molecule type" value="Genomic_DNA"/>
</dbReference>
<dbReference type="EMBL" id="CM000129">
    <property type="protein sequence ID" value="EAY96024.1"/>
    <property type="molecule type" value="Genomic_DNA"/>
</dbReference>
<dbReference type="EMBL" id="CT848385">
    <property type="status" value="NOT_ANNOTATED_CDS"/>
    <property type="molecule type" value="mRNA"/>
</dbReference>
<dbReference type="SMR" id="A2XYW4"/>
<dbReference type="STRING" id="39946.A2XYW4"/>
<dbReference type="EnsemblPlants" id="BGIOSGA017340-TA">
    <property type="protein sequence ID" value="BGIOSGA017340-PA"/>
    <property type="gene ID" value="BGIOSGA017340"/>
</dbReference>
<dbReference type="EnsemblPlants" id="OsGoSa_04g0030250.01">
    <property type="protein sequence ID" value="OsGoSa_04g0030250.01"/>
    <property type="gene ID" value="OsGoSa_04g0030250"/>
</dbReference>
<dbReference type="EnsemblPlants" id="OsGoSa_04g0030250.02">
    <property type="protein sequence ID" value="OsGoSa_04g0030250.02"/>
    <property type="gene ID" value="OsGoSa_04g0030250"/>
</dbReference>
<dbReference type="EnsemblPlants" id="OsIR64_04g0029850.01">
    <property type="protein sequence ID" value="OsIR64_04g0029850.01"/>
    <property type="gene ID" value="OsIR64_04g0029850"/>
</dbReference>
<dbReference type="EnsemblPlants" id="OsIR64_04g0029850.03">
    <property type="protein sequence ID" value="OsIR64_04g0029850.03"/>
    <property type="gene ID" value="OsIR64_04g0029850"/>
</dbReference>
<dbReference type="EnsemblPlants" id="OsKYG_04g0030130.02">
    <property type="protein sequence ID" value="OsKYG_04g0030130.02"/>
    <property type="gene ID" value="OsKYG_04g0030130"/>
</dbReference>
<dbReference type="EnsemblPlants" id="OsKYG_04g0030130.03">
    <property type="protein sequence ID" value="OsKYG_04g0030130.03"/>
    <property type="gene ID" value="OsKYG_04g0030130"/>
</dbReference>
<dbReference type="EnsemblPlants" id="OsLaMu_04g0030810.02">
    <property type="protein sequence ID" value="OsLaMu_04g0030810.02"/>
    <property type="gene ID" value="OsLaMu_04g0030810"/>
</dbReference>
<dbReference type="EnsemblPlants" id="OsLaMu_04g0030810.03">
    <property type="protein sequence ID" value="OsLaMu_04g0030810.03"/>
    <property type="gene ID" value="OsLaMu_04g0030810"/>
</dbReference>
<dbReference type="EnsemblPlants" id="OsLiXu_04g0030800.01">
    <property type="protein sequence ID" value="OsLiXu_04g0030800.01"/>
    <property type="gene ID" value="OsLiXu_04g0030800"/>
</dbReference>
<dbReference type="EnsemblPlants" id="OsLiXu_04g0030800.03">
    <property type="protein sequence ID" value="OsLiXu_04g0030800.03"/>
    <property type="gene ID" value="OsLiXu_04g0030800"/>
</dbReference>
<dbReference type="EnsemblPlants" id="OsMH63_04G031210_02">
    <property type="protein sequence ID" value="OsMH63_04G031210_02"/>
    <property type="gene ID" value="OsMH63_04G031210"/>
</dbReference>
<dbReference type="EnsemblPlants" id="OsMH63_04G031210_03">
    <property type="protein sequence ID" value="OsMH63_04G031210_03"/>
    <property type="gene ID" value="OsMH63_04G031210"/>
</dbReference>
<dbReference type="EnsemblPlants" id="OsPr106_04g0031200.01">
    <property type="protein sequence ID" value="OsPr106_04g0031200.01"/>
    <property type="gene ID" value="OsPr106_04g0031200"/>
</dbReference>
<dbReference type="EnsemblPlants" id="OsPr106_04g0031200.02">
    <property type="protein sequence ID" value="OsPr106_04g0031200.02"/>
    <property type="gene ID" value="OsPr106_04g0031200"/>
</dbReference>
<dbReference type="EnsemblPlants" id="OsZS97_04G031330_01">
    <property type="protein sequence ID" value="OsZS97_04G031330_01"/>
    <property type="gene ID" value="OsZS97_04G031330"/>
</dbReference>
<dbReference type="EnsemblPlants" id="OsZS97_04G031330_03">
    <property type="protein sequence ID" value="OsZS97_04G031330_03"/>
    <property type="gene ID" value="OsZS97_04G031330"/>
</dbReference>
<dbReference type="Gramene" id="BGIOSGA017340-TA">
    <property type="protein sequence ID" value="BGIOSGA017340-PA"/>
    <property type="gene ID" value="BGIOSGA017340"/>
</dbReference>
<dbReference type="Gramene" id="OsGoSa_04g0030250.01">
    <property type="protein sequence ID" value="OsGoSa_04g0030250.01"/>
    <property type="gene ID" value="OsGoSa_04g0030250"/>
</dbReference>
<dbReference type="Gramene" id="OsGoSa_04g0030250.02">
    <property type="protein sequence ID" value="OsGoSa_04g0030250.02"/>
    <property type="gene ID" value="OsGoSa_04g0030250"/>
</dbReference>
<dbReference type="Gramene" id="OsIR64_04g0029850.01">
    <property type="protein sequence ID" value="OsIR64_04g0029850.01"/>
    <property type="gene ID" value="OsIR64_04g0029850"/>
</dbReference>
<dbReference type="Gramene" id="OsIR64_04g0029850.03">
    <property type="protein sequence ID" value="OsIR64_04g0029850.03"/>
    <property type="gene ID" value="OsIR64_04g0029850"/>
</dbReference>
<dbReference type="Gramene" id="OsKYG_04g0030130.02">
    <property type="protein sequence ID" value="OsKYG_04g0030130.02"/>
    <property type="gene ID" value="OsKYG_04g0030130"/>
</dbReference>
<dbReference type="Gramene" id="OsKYG_04g0030130.03">
    <property type="protein sequence ID" value="OsKYG_04g0030130.03"/>
    <property type="gene ID" value="OsKYG_04g0030130"/>
</dbReference>
<dbReference type="Gramene" id="OsLaMu_04g0030810.02">
    <property type="protein sequence ID" value="OsLaMu_04g0030810.02"/>
    <property type="gene ID" value="OsLaMu_04g0030810"/>
</dbReference>
<dbReference type="Gramene" id="OsLaMu_04g0030810.03">
    <property type="protein sequence ID" value="OsLaMu_04g0030810.03"/>
    <property type="gene ID" value="OsLaMu_04g0030810"/>
</dbReference>
<dbReference type="Gramene" id="OsLiXu_04g0030800.01">
    <property type="protein sequence ID" value="OsLiXu_04g0030800.01"/>
    <property type="gene ID" value="OsLiXu_04g0030800"/>
</dbReference>
<dbReference type="Gramene" id="OsLiXu_04g0030800.03">
    <property type="protein sequence ID" value="OsLiXu_04g0030800.03"/>
    <property type="gene ID" value="OsLiXu_04g0030800"/>
</dbReference>
<dbReference type="Gramene" id="OsMH63_04G031210_02">
    <property type="protein sequence ID" value="OsMH63_04G031210_02"/>
    <property type="gene ID" value="OsMH63_04G031210"/>
</dbReference>
<dbReference type="Gramene" id="OsMH63_04G031210_03">
    <property type="protein sequence ID" value="OsMH63_04G031210_03"/>
    <property type="gene ID" value="OsMH63_04G031210"/>
</dbReference>
<dbReference type="Gramene" id="OsPr106_04g0031200.01">
    <property type="protein sequence ID" value="OsPr106_04g0031200.01"/>
    <property type="gene ID" value="OsPr106_04g0031200"/>
</dbReference>
<dbReference type="Gramene" id="OsPr106_04g0031200.02">
    <property type="protein sequence ID" value="OsPr106_04g0031200.02"/>
    <property type="gene ID" value="OsPr106_04g0031200"/>
</dbReference>
<dbReference type="Gramene" id="OsZS97_04G031330_01">
    <property type="protein sequence ID" value="OsZS97_04G031330_01"/>
    <property type="gene ID" value="OsZS97_04G031330"/>
</dbReference>
<dbReference type="Gramene" id="OsZS97_04G031330_03">
    <property type="protein sequence ID" value="OsZS97_04G031330_03"/>
    <property type="gene ID" value="OsZS97_04G031330"/>
</dbReference>
<dbReference type="HOGENOM" id="CLU_064393_0_0_1"/>
<dbReference type="OMA" id="ACKNCTW"/>
<dbReference type="OrthoDB" id="311633at2759"/>
<dbReference type="Proteomes" id="UP000007015">
    <property type="component" value="Chromosome 4"/>
</dbReference>
<dbReference type="GO" id="GO:0005758">
    <property type="term" value="C:mitochondrial intermembrane space"/>
    <property type="evidence" value="ECO:0007669"/>
    <property type="project" value="UniProtKB-SubCell"/>
</dbReference>
<dbReference type="GO" id="GO:0051537">
    <property type="term" value="F:2 iron, 2 sulfur cluster binding"/>
    <property type="evidence" value="ECO:0007669"/>
    <property type="project" value="UniProtKB-UniRule"/>
</dbReference>
<dbReference type="GO" id="GO:0051539">
    <property type="term" value="F:4 iron, 4 sulfur cluster binding"/>
    <property type="evidence" value="ECO:0007669"/>
    <property type="project" value="UniProtKB-KW"/>
</dbReference>
<dbReference type="GO" id="GO:0009055">
    <property type="term" value="F:electron transfer activity"/>
    <property type="evidence" value="ECO:0007669"/>
    <property type="project" value="UniProtKB-UniRule"/>
</dbReference>
<dbReference type="GO" id="GO:0046872">
    <property type="term" value="F:metal ion binding"/>
    <property type="evidence" value="ECO:0007669"/>
    <property type="project" value="UniProtKB-KW"/>
</dbReference>
<dbReference type="GO" id="GO:0016226">
    <property type="term" value="P:iron-sulfur cluster assembly"/>
    <property type="evidence" value="ECO:0007669"/>
    <property type="project" value="UniProtKB-UniRule"/>
</dbReference>
<dbReference type="FunFam" id="3.40.50.150:FF:000178">
    <property type="entry name" value="Anamorsin homolog"/>
    <property type="match status" value="1"/>
</dbReference>
<dbReference type="Gene3D" id="3.40.50.150">
    <property type="entry name" value="Vaccinia Virus protein VP39"/>
    <property type="match status" value="1"/>
</dbReference>
<dbReference type="HAMAP" id="MF_03115">
    <property type="entry name" value="Anamorsin"/>
    <property type="match status" value="1"/>
</dbReference>
<dbReference type="InterPro" id="IPR007785">
    <property type="entry name" value="Anamorsin"/>
</dbReference>
<dbReference type="InterPro" id="IPR046408">
    <property type="entry name" value="CIAPIN1"/>
</dbReference>
<dbReference type="InterPro" id="IPR029063">
    <property type="entry name" value="SAM-dependent_MTases_sf"/>
</dbReference>
<dbReference type="PANTHER" id="PTHR13273">
    <property type="entry name" value="ANAMORSIN"/>
    <property type="match status" value="1"/>
</dbReference>
<dbReference type="PANTHER" id="PTHR13273:SF14">
    <property type="entry name" value="ANAMORSIN"/>
    <property type="match status" value="1"/>
</dbReference>
<dbReference type="Pfam" id="PF05093">
    <property type="entry name" value="CIAPIN1"/>
    <property type="match status" value="1"/>
</dbReference>
<name>DRE21_ORYSI</name>
<protein>
    <recommendedName>
        <fullName evidence="1">Anamorsin homolog 1</fullName>
    </recommendedName>
    <alternativeName>
        <fullName evidence="1">Fe-S cluster assembly protein DRE2 homolog 1</fullName>
    </alternativeName>
</protein>
<gene>
    <name type="ORF">H0403D02.15</name>
    <name type="ORF">OsI_17896</name>
</gene>